<keyword id="KW-0963">Cytoplasm</keyword>
<keyword id="KW-0444">Lipid biosynthesis</keyword>
<keyword id="KW-0443">Lipid metabolism</keyword>
<keyword id="KW-0460">Magnesium</keyword>
<keyword id="KW-0479">Metal-binding</keyword>
<keyword id="KW-0594">Phospholipid biosynthesis</keyword>
<keyword id="KW-1208">Phospholipid metabolism</keyword>
<keyword id="KW-1185">Reference proteome</keyword>
<keyword id="KW-0808">Transferase</keyword>
<feature type="chain" id="PRO_0000350683" description="Geranylgeranylglyceryl phosphate synthase">
    <location>
        <begin position="1"/>
        <end position="228"/>
    </location>
</feature>
<feature type="binding site" evidence="1">
    <location>
        <position position="11"/>
    </location>
    <ligand>
        <name>sn-glycerol 1-phosphate</name>
        <dbReference type="ChEBI" id="CHEBI:57685"/>
    </ligand>
</feature>
<feature type="binding site" evidence="1">
    <location>
        <position position="13"/>
    </location>
    <ligand>
        <name>Mg(2+)</name>
        <dbReference type="ChEBI" id="CHEBI:18420"/>
    </ligand>
</feature>
<feature type="binding site" evidence="1">
    <location>
        <position position="39"/>
    </location>
    <ligand>
        <name>Mg(2+)</name>
        <dbReference type="ChEBI" id="CHEBI:18420"/>
    </ligand>
</feature>
<feature type="binding site" evidence="1">
    <location>
        <begin position="159"/>
        <end position="164"/>
    </location>
    <ligand>
        <name>sn-glycerol 1-phosphate</name>
        <dbReference type="ChEBI" id="CHEBI:57685"/>
    </ligand>
</feature>
<feature type="binding site" evidence="1">
    <location>
        <position position="189"/>
    </location>
    <ligand>
        <name>sn-glycerol 1-phosphate</name>
        <dbReference type="ChEBI" id="CHEBI:57685"/>
    </ligand>
</feature>
<feature type="binding site" evidence="1">
    <location>
        <begin position="209"/>
        <end position="210"/>
    </location>
    <ligand>
        <name>sn-glycerol 1-phosphate</name>
        <dbReference type="ChEBI" id="CHEBI:57685"/>
    </ligand>
</feature>
<evidence type="ECO:0000255" key="1">
    <source>
        <dbReference type="HAMAP-Rule" id="MF_00112"/>
    </source>
</evidence>
<evidence type="ECO:0000305" key="2"/>
<proteinExistence type="inferred from homology"/>
<gene>
    <name type="ordered locus">Mboo_0860</name>
</gene>
<protein>
    <recommendedName>
        <fullName evidence="1">Geranylgeranylglyceryl phosphate synthase</fullName>
        <shortName evidence="1">GGGP synthase</shortName>
        <shortName evidence="1">GGGPS</shortName>
        <ecNumber evidence="1">2.5.1.41</ecNumber>
    </recommendedName>
    <alternativeName>
        <fullName evidence="1">(S)-3-O-geranylgeranylglyceryl phosphate synthase</fullName>
    </alternativeName>
    <alternativeName>
        <fullName evidence="1">Phosphoglycerol geranylgeranyltransferase</fullName>
    </alternativeName>
</protein>
<reference key="1">
    <citation type="journal article" date="2015" name="Microbiology">
        <title>Genome of Methanoregula boonei 6A8 reveals adaptations to oligotrophic peatland environments.</title>
        <authorList>
            <person name="Braeuer S."/>
            <person name="Cadillo-Quiroz H."/>
            <person name="Kyrpides N."/>
            <person name="Woyke T."/>
            <person name="Goodwin L."/>
            <person name="Detter C."/>
            <person name="Podell S."/>
            <person name="Yavitt J.B."/>
            <person name="Zinder S.H."/>
        </authorList>
    </citation>
    <scope>NUCLEOTIDE SEQUENCE [LARGE SCALE GENOMIC DNA]</scope>
    <source>
        <strain>DSM 21154 / JCM 14090 / 6A8</strain>
    </source>
</reference>
<sequence length="228" mass="24631">MKWKDWVHVTKLDPDKQLGPGDIDAIAASGTDALMLSGTLNVTKENLLALQKMIAQYDLPLVMEPAGPEAVLMEGIEYVFVPSVLNTTDVQWIVGKHRSWVQQQDGKIPWDMVVPEAYIVLNPASSVGRVTKAVCDLKPAEVAAYTEVADRYFHFPIVYIEYSGTYGAPAVVKAAAEAIDHAILYYGGGINSAEKAAEMGKYADTIVVGNAVYDQGASVLKATVDAVQ</sequence>
<organism>
    <name type="scientific">Methanoregula boonei (strain DSM 21154 / JCM 14090 / 6A8)</name>
    <dbReference type="NCBI Taxonomy" id="456442"/>
    <lineage>
        <taxon>Archaea</taxon>
        <taxon>Methanobacteriati</taxon>
        <taxon>Methanobacteriota</taxon>
        <taxon>Stenosarchaea group</taxon>
        <taxon>Methanomicrobia</taxon>
        <taxon>Methanomicrobiales</taxon>
        <taxon>Methanoregulaceae</taxon>
        <taxon>Methanoregula</taxon>
    </lineage>
</organism>
<dbReference type="EC" id="2.5.1.41" evidence="1"/>
<dbReference type="EMBL" id="CP000780">
    <property type="protein sequence ID" value="ABS55378.1"/>
    <property type="status" value="ALT_INIT"/>
    <property type="molecule type" value="Genomic_DNA"/>
</dbReference>
<dbReference type="RefSeq" id="WP_048068593.1">
    <property type="nucleotide sequence ID" value="NC_009712.1"/>
</dbReference>
<dbReference type="SMR" id="A7I6L7"/>
<dbReference type="STRING" id="456442.Mboo_0860"/>
<dbReference type="GeneID" id="5411479"/>
<dbReference type="KEGG" id="mbn:Mboo_0860"/>
<dbReference type="eggNOG" id="arCOG01085">
    <property type="taxonomic scope" value="Archaea"/>
</dbReference>
<dbReference type="HOGENOM" id="CLU_095211_0_0_2"/>
<dbReference type="UniPathway" id="UPA00940"/>
<dbReference type="Proteomes" id="UP000002408">
    <property type="component" value="Chromosome"/>
</dbReference>
<dbReference type="GO" id="GO:0005737">
    <property type="term" value="C:cytoplasm"/>
    <property type="evidence" value="ECO:0007669"/>
    <property type="project" value="UniProtKB-SubCell"/>
</dbReference>
<dbReference type="GO" id="GO:0000287">
    <property type="term" value="F:magnesium ion binding"/>
    <property type="evidence" value="ECO:0007669"/>
    <property type="project" value="UniProtKB-UniRule"/>
</dbReference>
<dbReference type="GO" id="GO:0047294">
    <property type="term" value="F:phosphoglycerol geranylgeranyltransferase activity"/>
    <property type="evidence" value="ECO:0007669"/>
    <property type="project" value="UniProtKB-UniRule"/>
</dbReference>
<dbReference type="GO" id="GO:0046474">
    <property type="term" value="P:glycerophospholipid biosynthetic process"/>
    <property type="evidence" value="ECO:0007669"/>
    <property type="project" value="UniProtKB-UniRule"/>
</dbReference>
<dbReference type="CDD" id="cd02812">
    <property type="entry name" value="PcrB_like"/>
    <property type="match status" value="1"/>
</dbReference>
<dbReference type="Gene3D" id="3.20.20.390">
    <property type="entry name" value="FMN-linked oxidoreductases"/>
    <property type="match status" value="1"/>
</dbReference>
<dbReference type="HAMAP" id="MF_00112">
    <property type="entry name" value="GGGP_HepGP_synthase"/>
    <property type="match status" value="1"/>
</dbReference>
<dbReference type="InterPro" id="IPR039074">
    <property type="entry name" value="GGGP/HepGP_synthase_I"/>
</dbReference>
<dbReference type="InterPro" id="IPR038597">
    <property type="entry name" value="GGGP/HepGP_synthase_sf"/>
</dbReference>
<dbReference type="InterPro" id="IPR008205">
    <property type="entry name" value="GGGP_HepGP_synthase"/>
</dbReference>
<dbReference type="InterPro" id="IPR026438">
    <property type="entry name" value="GGGP_synthase_archaea"/>
</dbReference>
<dbReference type="NCBIfam" id="TIGR01768">
    <property type="entry name" value="GGGP-family"/>
    <property type="match status" value="1"/>
</dbReference>
<dbReference type="NCBIfam" id="TIGR04146">
    <property type="entry name" value="GGGPS_Afulg"/>
    <property type="match status" value="1"/>
</dbReference>
<dbReference type="NCBIfam" id="NF003199">
    <property type="entry name" value="PRK04169.1-3"/>
    <property type="match status" value="1"/>
</dbReference>
<dbReference type="PANTHER" id="PTHR40029">
    <property type="match status" value="1"/>
</dbReference>
<dbReference type="PANTHER" id="PTHR40029:SF2">
    <property type="entry name" value="HEPTAPRENYLGLYCERYL PHOSPHATE SYNTHASE"/>
    <property type="match status" value="1"/>
</dbReference>
<dbReference type="Pfam" id="PF01884">
    <property type="entry name" value="PcrB"/>
    <property type="match status" value="1"/>
</dbReference>
<dbReference type="SUPFAM" id="SSF51395">
    <property type="entry name" value="FMN-linked oxidoreductases"/>
    <property type="match status" value="1"/>
</dbReference>
<comment type="function">
    <text evidence="1">Prenyltransferase that catalyzes the transfer of the geranylgeranyl moiety of geranylgeranyl diphosphate (GGPP) to the C3 hydroxyl of sn-glycerol-1-phosphate (G1P). This reaction is the first ether-bond-formation step in the biosynthesis of archaeal membrane lipids.</text>
</comment>
<comment type="catalytic activity">
    <reaction evidence="1">
        <text>sn-glycerol 1-phosphate + (2E,6E,10E)-geranylgeranyl diphosphate = sn-3-O-(geranylgeranyl)glycerol 1-phosphate + diphosphate</text>
        <dbReference type="Rhea" id="RHEA:23404"/>
        <dbReference type="ChEBI" id="CHEBI:33019"/>
        <dbReference type="ChEBI" id="CHEBI:57677"/>
        <dbReference type="ChEBI" id="CHEBI:57685"/>
        <dbReference type="ChEBI" id="CHEBI:58756"/>
        <dbReference type="EC" id="2.5.1.41"/>
    </reaction>
</comment>
<comment type="cofactor">
    <cofactor evidence="1">
        <name>Mg(2+)</name>
        <dbReference type="ChEBI" id="CHEBI:18420"/>
    </cofactor>
</comment>
<comment type="pathway">
    <text evidence="1">Membrane lipid metabolism; glycerophospholipid metabolism.</text>
</comment>
<comment type="subcellular location">
    <subcellularLocation>
        <location evidence="1">Cytoplasm</location>
    </subcellularLocation>
</comment>
<comment type="similarity">
    <text evidence="1">Belongs to the GGGP/HepGP synthase family. Group I subfamily.</text>
</comment>
<comment type="sequence caution" evidence="2">
    <conflict type="erroneous initiation">
        <sequence resource="EMBL-CDS" id="ABS55378"/>
    </conflict>
</comment>
<accession>A7I6L7</accession>
<name>GGGPS_METB6</name>